<geneLocation type="chloroplast"/>
<accession>Q9MSV2</accession>
<accession>Q9MT93</accession>
<proteinExistence type="inferred from homology"/>
<comment type="function">
    <text evidence="1">Usually encoded in the trnK tRNA gene intron. Probably assists in splicing its own and other chloroplast group II introns.</text>
</comment>
<comment type="subcellular location">
    <subcellularLocation>
        <location>Plastid</location>
        <location>Chloroplast</location>
    </subcellularLocation>
</comment>
<comment type="similarity">
    <text evidence="1">Belongs to the intron maturase 2 family. MatK subfamily.</text>
</comment>
<reference key="1">
    <citation type="journal article" date="2000" name="Am. J. Bot.">
        <title>Relationships within Cupressaceae sensu lato: a combined morphological and molecular approach.</title>
        <authorList>
            <person name="Gadek P.A."/>
            <person name="Alpers D.L."/>
            <person name="Heslewood M.M."/>
            <person name="Quinn C.J."/>
        </authorList>
    </citation>
    <scope>NUCLEOTIDE SEQUENCE [GENOMIC DNA]</scope>
</reference>
<reference key="2">
    <citation type="submission" date="1999-07" db="EMBL/GenBank/DDBJ databases">
        <title>Phylogenetic relationships in Taxodiaceae and Cupressaceae based on the matK, chlL, trnL-trnF IGS region and trnL intron sequences.</title>
        <authorList>
            <person name="Kusumi J."/>
            <person name="Tsumura Y."/>
            <person name="Yoshimaru H."/>
            <person name="Tachida H."/>
        </authorList>
    </citation>
    <scope>NUCLEOTIDE SEQUENCE [GENOMIC DNA] OF 1-477</scope>
    <source>
        <tissue>Leaf</tissue>
    </source>
</reference>
<dbReference type="EMBL" id="AF152185">
    <property type="protein sequence ID" value="AAF25738.1"/>
    <property type="molecule type" value="Genomic_DNA"/>
</dbReference>
<dbReference type="EMBL" id="AB030125">
    <property type="protein sequence ID" value="BAB01554.1"/>
    <property type="molecule type" value="Genomic_DNA"/>
</dbReference>
<dbReference type="RefSeq" id="YP_008082097.1">
    <property type="nucleotide sequence ID" value="NC_021437.1"/>
</dbReference>
<dbReference type="GeneID" id="15824208"/>
<dbReference type="GO" id="GO:0009507">
    <property type="term" value="C:chloroplast"/>
    <property type="evidence" value="ECO:0007669"/>
    <property type="project" value="UniProtKB-SubCell"/>
</dbReference>
<dbReference type="GO" id="GO:0003723">
    <property type="term" value="F:RNA binding"/>
    <property type="evidence" value="ECO:0007669"/>
    <property type="project" value="UniProtKB-KW"/>
</dbReference>
<dbReference type="GO" id="GO:0006397">
    <property type="term" value="P:mRNA processing"/>
    <property type="evidence" value="ECO:0007669"/>
    <property type="project" value="UniProtKB-KW"/>
</dbReference>
<dbReference type="GO" id="GO:0008380">
    <property type="term" value="P:RNA splicing"/>
    <property type="evidence" value="ECO:0007669"/>
    <property type="project" value="UniProtKB-UniRule"/>
</dbReference>
<dbReference type="GO" id="GO:0008033">
    <property type="term" value="P:tRNA processing"/>
    <property type="evidence" value="ECO:0007669"/>
    <property type="project" value="UniProtKB-KW"/>
</dbReference>
<dbReference type="HAMAP" id="MF_01390">
    <property type="entry name" value="MatK"/>
    <property type="match status" value="1"/>
</dbReference>
<dbReference type="InterPro" id="IPR024937">
    <property type="entry name" value="Domain_X"/>
</dbReference>
<dbReference type="InterPro" id="IPR002866">
    <property type="entry name" value="Maturase_MatK"/>
</dbReference>
<dbReference type="InterPro" id="IPR024942">
    <property type="entry name" value="Maturase_MatK_N"/>
</dbReference>
<dbReference type="PANTHER" id="PTHR34811">
    <property type="entry name" value="MATURASE K"/>
    <property type="match status" value="1"/>
</dbReference>
<dbReference type="PANTHER" id="PTHR34811:SF1">
    <property type="entry name" value="MATURASE K"/>
    <property type="match status" value="1"/>
</dbReference>
<dbReference type="Pfam" id="PF01348">
    <property type="entry name" value="Intron_maturas2"/>
    <property type="match status" value="1"/>
</dbReference>
<dbReference type="Pfam" id="PF01824">
    <property type="entry name" value="MatK_N"/>
    <property type="match status" value="1"/>
</dbReference>
<organism>
    <name type="scientific">Cunninghamia lanceolata</name>
    <name type="common">China fir</name>
    <name type="synonym">Pinus lanceolata</name>
    <dbReference type="NCBI Taxonomy" id="28977"/>
    <lineage>
        <taxon>Eukaryota</taxon>
        <taxon>Viridiplantae</taxon>
        <taxon>Streptophyta</taxon>
        <taxon>Embryophyta</taxon>
        <taxon>Tracheophyta</taxon>
        <taxon>Spermatophyta</taxon>
        <taxon>Pinopsida</taxon>
        <taxon>Pinidae</taxon>
        <taxon>Conifers II</taxon>
        <taxon>Cupressales</taxon>
        <taxon>Cupressaceae</taxon>
        <taxon>Cunninghamia</taxon>
    </lineage>
</organism>
<name>MATK_CUNLA</name>
<sequence>MDQFQRNGNKHRSWQQFFLYPLFFREDLYAIAHDHHLDRSSSSEPTEILVSNFFSFLTVKRSIRRIRKQKNSISLFGNCSPNKFLGCNKNFYSKLILEGLTVVLEVSFAMRSKHFIEGMDGWNSIQSIHCIFPLMEDKLPHSNYISDIRVPYSIHPEILVRIFRRWIRDAPSLHLLRSILHEWKNSFSRENLQKALVTQRENTRFSLFLWNSYVYEFESFLVPFVKRFSHSQSLLYGSFPDRTHFDKKIKHIVIFPRKISTKRIWLLKDPFMHYVRYGERSLIALKGTHLQVKKCRYHLFHFWQCYFHLWFQPYRVCSLELSKTYSSFLGYFLHVKMKPLVVRAKMLDDLFITDLITIELNPIAPIRSILFFLAKEKFCDISGRPISKLSWTSLSDDDILDRFDRIWINLFYYYSGSINQDGLYHIKYILLLSCAKTLACKHKSTIRVVREELGSELFTKSFSKEREFISSSFSKTRSQRERIWNSDISQINPLANFWQKIQNKQIEN</sequence>
<evidence type="ECO:0000255" key="1">
    <source>
        <dbReference type="HAMAP-Rule" id="MF_01390"/>
    </source>
</evidence>
<keyword id="KW-0150">Chloroplast</keyword>
<keyword id="KW-0507">mRNA processing</keyword>
<keyword id="KW-0934">Plastid</keyword>
<keyword id="KW-0694">RNA-binding</keyword>
<keyword id="KW-0819">tRNA processing</keyword>
<protein>
    <recommendedName>
        <fullName evidence="1">Maturase K</fullName>
    </recommendedName>
    <alternativeName>
        <fullName evidence="1">Intron maturase</fullName>
    </alternativeName>
</protein>
<gene>
    <name evidence="1" type="primary">matK</name>
</gene>
<feature type="chain" id="PRO_0000143347" description="Maturase K">
    <location>
        <begin position="1"/>
        <end position="508"/>
    </location>
</feature>